<reference key="1">
    <citation type="journal article" date="2006" name="Science">
        <title>Genomic islands and the ecology and evolution of Prochlorococcus.</title>
        <authorList>
            <person name="Coleman M.L."/>
            <person name="Sullivan M.B."/>
            <person name="Martiny A.C."/>
            <person name="Steglich C."/>
            <person name="Barry K."/>
            <person name="Delong E.F."/>
            <person name="Chisholm S.W."/>
        </authorList>
    </citation>
    <scope>NUCLEOTIDE SEQUENCE [LARGE SCALE GENOMIC DNA]</scope>
    <source>
        <strain>MIT 9312</strain>
    </source>
</reference>
<organism>
    <name type="scientific">Prochlorococcus marinus (strain MIT 9312)</name>
    <dbReference type="NCBI Taxonomy" id="74546"/>
    <lineage>
        <taxon>Bacteria</taxon>
        <taxon>Bacillati</taxon>
        <taxon>Cyanobacteriota</taxon>
        <taxon>Cyanophyceae</taxon>
        <taxon>Synechococcales</taxon>
        <taxon>Prochlorococcaceae</taxon>
        <taxon>Prochlorococcus</taxon>
    </lineage>
</organism>
<proteinExistence type="inferred from homology"/>
<accession>Q31CS5</accession>
<feature type="chain" id="PRO_0000336520" description="CinA-like protein">
    <location>
        <begin position="1"/>
        <end position="424"/>
    </location>
</feature>
<comment type="similarity">
    <text evidence="1">Belongs to the CinA family.</text>
</comment>
<name>CINAL_PROM9</name>
<evidence type="ECO:0000255" key="1">
    <source>
        <dbReference type="HAMAP-Rule" id="MF_00226"/>
    </source>
</evidence>
<gene>
    <name type="ordered locus">PMT9312_0259</name>
</gene>
<sequence>MTSNSKGVEILSIGTELLLGNIVNTNAKWISEQLSQLGLNHFRQSTVGDNCDRIIKVIQEISQRSNLLITTGGLGPTPDDLTTEAIAKSFNVSLFEKEYLWDEIKQKLSNSKLQDNYSSLRKQCFFPKNAQIINNPRGTAPGMIWEPIKGFTILTFPGVPSEMKTMWEETALDFIKNKFSDSYSFFSNTLKFSGIGESTVAEKINDLLNLKNPTVAPYANLGEVKLRITARAKSEVEANNLINPVKEKLKKEFSNFIFGENHDTLPGVLIKELAKRNETIVFAESCTGGLLSSSITSISGSSQVFLGSIVTYSNDLKNSLLNISEEKLKKYGAVSEKVCQAMATNVKEKLEADWAIAISGIAGPNGGCKEKPVGLVHISISGPNNHITNIKKTFNSTRNRIEIQTLSVNVCLNSLRLILLSKRK</sequence>
<dbReference type="EMBL" id="CP000111">
    <property type="protein sequence ID" value="ABB49320.1"/>
    <property type="molecule type" value="Genomic_DNA"/>
</dbReference>
<dbReference type="RefSeq" id="WP_011375822.1">
    <property type="nucleotide sequence ID" value="NC_007577.1"/>
</dbReference>
<dbReference type="SMR" id="Q31CS5"/>
<dbReference type="STRING" id="74546.PMT9312_0259"/>
<dbReference type="KEGG" id="pmi:PMT9312_0259"/>
<dbReference type="eggNOG" id="COG1058">
    <property type="taxonomic scope" value="Bacteria"/>
</dbReference>
<dbReference type="eggNOG" id="COG1546">
    <property type="taxonomic scope" value="Bacteria"/>
</dbReference>
<dbReference type="HOGENOM" id="CLU_030805_9_3_3"/>
<dbReference type="OrthoDB" id="9801454at2"/>
<dbReference type="Proteomes" id="UP000002715">
    <property type="component" value="Chromosome"/>
</dbReference>
<dbReference type="CDD" id="cd00885">
    <property type="entry name" value="cinA"/>
    <property type="match status" value="1"/>
</dbReference>
<dbReference type="Gene3D" id="3.30.70.2860">
    <property type="match status" value="1"/>
</dbReference>
<dbReference type="Gene3D" id="3.90.950.20">
    <property type="entry name" value="CinA-like"/>
    <property type="match status" value="1"/>
</dbReference>
<dbReference type="Gene3D" id="3.40.980.10">
    <property type="entry name" value="MoaB/Mog-like domain"/>
    <property type="match status" value="1"/>
</dbReference>
<dbReference type="HAMAP" id="MF_00226_B">
    <property type="entry name" value="CinA_B"/>
    <property type="match status" value="1"/>
</dbReference>
<dbReference type="InterPro" id="IPR050101">
    <property type="entry name" value="CinA"/>
</dbReference>
<dbReference type="InterPro" id="IPR036653">
    <property type="entry name" value="CinA-like_C"/>
</dbReference>
<dbReference type="InterPro" id="IPR008136">
    <property type="entry name" value="CinA_C"/>
</dbReference>
<dbReference type="InterPro" id="IPR041424">
    <property type="entry name" value="CinA_KH"/>
</dbReference>
<dbReference type="InterPro" id="IPR008135">
    <property type="entry name" value="Competence-induced_CinA"/>
</dbReference>
<dbReference type="InterPro" id="IPR036425">
    <property type="entry name" value="MoaB/Mog-like_dom_sf"/>
</dbReference>
<dbReference type="InterPro" id="IPR001453">
    <property type="entry name" value="MoaB/Mog_dom"/>
</dbReference>
<dbReference type="NCBIfam" id="TIGR00200">
    <property type="entry name" value="cinA_nterm"/>
    <property type="match status" value="1"/>
</dbReference>
<dbReference type="NCBIfam" id="TIGR00177">
    <property type="entry name" value="molyb_syn"/>
    <property type="match status" value="1"/>
</dbReference>
<dbReference type="NCBIfam" id="TIGR00199">
    <property type="entry name" value="PncC_domain"/>
    <property type="match status" value="1"/>
</dbReference>
<dbReference type="NCBIfam" id="NF001813">
    <property type="entry name" value="PRK00549.1"/>
    <property type="match status" value="1"/>
</dbReference>
<dbReference type="PANTHER" id="PTHR13939">
    <property type="entry name" value="NICOTINAMIDE-NUCLEOTIDE AMIDOHYDROLASE PNCC"/>
    <property type="match status" value="1"/>
</dbReference>
<dbReference type="PANTHER" id="PTHR13939:SF0">
    <property type="entry name" value="NMN AMIDOHYDROLASE-LIKE PROTEIN YFAY"/>
    <property type="match status" value="1"/>
</dbReference>
<dbReference type="Pfam" id="PF02464">
    <property type="entry name" value="CinA"/>
    <property type="match status" value="1"/>
</dbReference>
<dbReference type="Pfam" id="PF18146">
    <property type="entry name" value="CinA_KH"/>
    <property type="match status" value="1"/>
</dbReference>
<dbReference type="Pfam" id="PF00994">
    <property type="entry name" value="MoCF_biosynth"/>
    <property type="match status" value="1"/>
</dbReference>
<dbReference type="PIRSF" id="PIRSF006728">
    <property type="entry name" value="CinA"/>
    <property type="match status" value="1"/>
</dbReference>
<dbReference type="SMART" id="SM00852">
    <property type="entry name" value="MoCF_biosynth"/>
    <property type="match status" value="1"/>
</dbReference>
<dbReference type="SUPFAM" id="SSF142433">
    <property type="entry name" value="CinA-like"/>
    <property type="match status" value="1"/>
</dbReference>
<dbReference type="SUPFAM" id="SSF53218">
    <property type="entry name" value="Molybdenum cofactor biosynthesis proteins"/>
    <property type="match status" value="1"/>
</dbReference>
<protein>
    <recommendedName>
        <fullName evidence="1">CinA-like protein</fullName>
    </recommendedName>
</protein>